<proteinExistence type="inferred from homology"/>
<reference key="1">
    <citation type="submission" date="2007-10" db="EMBL/GenBank/DDBJ databases">
        <title>Brucella canis ATCC 23365 whole genome shotgun sequencing project.</title>
        <authorList>
            <person name="Setubal J.C."/>
            <person name="Bowns C."/>
            <person name="Boyle S."/>
            <person name="Crasta O.R."/>
            <person name="Czar M.J."/>
            <person name="Dharmanolla C."/>
            <person name="Gillespie J.J."/>
            <person name="Kenyon R.W."/>
            <person name="Lu J."/>
            <person name="Mane S."/>
            <person name="Mohapatra S."/>
            <person name="Nagrani S."/>
            <person name="Purkayastha A."/>
            <person name="Rajasimha H.K."/>
            <person name="Shallom J.M."/>
            <person name="Shallom S."/>
            <person name="Shukla M."/>
            <person name="Snyder E.E."/>
            <person name="Sobral B.W."/>
            <person name="Wattam A.R."/>
            <person name="Will R."/>
            <person name="Williams K."/>
            <person name="Yoo H."/>
            <person name="Bruce D."/>
            <person name="Detter C."/>
            <person name="Munk C."/>
            <person name="Brettin T.S."/>
        </authorList>
    </citation>
    <scope>NUCLEOTIDE SEQUENCE [LARGE SCALE GENOMIC DNA]</scope>
    <source>
        <strain>ATCC 23365 / NCTC 10854 / RM-666</strain>
    </source>
</reference>
<sequence>MALKHFNPITPGQRQLVIVDRSELYKGKPVKPLTEGLSKKGGRNNTGRITVRFQGGGHKRSYRFIDFKRRKLDVVGTVERLEYDPNRTAFIALIRYTDGELAYILAPQRLAVGDQVVAGNSVDVKPGNAMPLSSMPVGTIIHNVELKPGKGGQIARSAGTYAQLVGRDQGMAILRLNSGEQRLVSGACFASVGAVSNPDHGNINDGKAGRSVWRGKRPHVRGVAMNPVDHPHGGGEGRTSGGRHPVTPWGKPTKGKKTRSNKATDKFIMRSRHQRKK</sequence>
<accession>A9M5P7</accession>
<evidence type="ECO:0000255" key="1">
    <source>
        <dbReference type="HAMAP-Rule" id="MF_01320"/>
    </source>
</evidence>
<evidence type="ECO:0000256" key="2">
    <source>
        <dbReference type="SAM" id="MobiDB-lite"/>
    </source>
</evidence>
<evidence type="ECO:0000305" key="3"/>
<feature type="chain" id="PRO_1000086319" description="Large ribosomal subunit protein uL2">
    <location>
        <begin position="1"/>
        <end position="277"/>
    </location>
</feature>
<feature type="region of interest" description="Disordered" evidence="2">
    <location>
        <begin position="222"/>
        <end position="277"/>
    </location>
</feature>
<gene>
    <name evidence="1" type="primary">rplB</name>
    <name type="ordered locus">BCAN_A1253</name>
</gene>
<keyword id="KW-1185">Reference proteome</keyword>
<keyword id="KW-0687">Ribonucleoprotein</keyword>
<keyword id="KW-0689">Ribosomal protein</keyword>
<keyword id="KW-0694">RNA-binding</keyword>
<keyword id="KW-0699">rRNA-binding</keyword>
<organism>
    <name type="scientific">Brucella canis (strain ATCC 23365 / NCTC 10854 / RM-666)</name>
    <dbReference type="NCBI Taxonomy" id="483179"/>
    <lineage>
        <taxon>Bacteria</taxon>
        <taxon>Pseudomonadati</taxon>
        <taxon>Pseudomonadota</taxon>
        <taxon>Alphaproteobacteria</taxon>
        <taxon>Hyphomicrobiales</taxon>
        <taxon>Brucellaceae</taxon>
        <taxon>Brucella/Ochrobactrum group</taxon>
        <taxon>Brucella</taxon>
    </lineage>
</organism>
<protein>
    <recommendedName>
        <fullName evidence="1">Large ribosomal subunit protein uL2</fullName>
    </recommendedName>
    <alternativeName>
        <fullName evidence="3">50S ribosomal protein L2</fullName>
    </alternativeName>
</protein>
<name>RL2_BRUC2</name>
<comment type="function">
    <text evidence="1">One of the primary rRNA binding proteins. Required for association of the 30S and 50S subunits to form the 70S ribosome, for tRNA binding and peptide bond formation. It has been suggested to have peptidyltransferase activity; this is somewhat controversial. Makes several contacts with the 16S rRNA in the 70S ribosome.</text>
</comment>
<comment type="subunit">
    <text evidence="1">Part of the 50S ribosomal subunit. Forms a bridge to the 30S subunit in the 70S ribosome.</text>
</comment>
<comment type="similarity">
    <text evidence="1">Belongs to the universal ribosomal protein uL2 family.</text>
</comment>
<dbReference type="EMBL" id="CP000872">
    <property type="protein sequence ID" value="ABX62302.1"/>
    <property type="molecule type" value="Genomic_DNA"/>
</dbReference>
<dbReference type="RefSeq" id="WP_004690917.1">
    <property type="nucleotide sequence ID" value="NC_010103.1"/>
</dbReference>
<dbReference type="SMR" id="A9M5P7"/>
<dbReference type="GeneID" id="55590905"/>
<dbReference type="KEGG" id="bcs:BCAN_A1253"/>
<dbReference type="HOGENOM" id="CLU_036235_2_1_5"/>
<dbReference type="PhylomeDB" id="A9M5P7"/>
<dbReference type="Proteomes" id="UP000001385">
    <property type="component" value="Chromosome I"/>
</dbReference>
<dbReference type="GO" id="GO:0015934">
    <property type="term" value="C:large ribosomal subunit"/>
    <property type="evidence" value="ECO:0007669"/>
    <property type="project" value="InterPro"/>
</dbReference>
<dbReference type="GO" id="GO:0019843">
    <property type="term" value="F:rRNA binding"/>
    <property type="evidence" value="ECO:0007669"/>
    <property type="project" value="UniProtKB-UniRule"/>
</dbReference>
<dbReference type="GO" id="GO:0003735">
    <property type="term" value="F:structural constituent of ribosome"/>
    <property type="evidence" value="ECO:0007669"/>
    <property type="project" value="InterPro"/>
</dbReference>
<dbReference type="GO" id="GO:0016740">
    <property type="term" value="F:transferase activity"/>
    <property type="evidence" value="ECO:0007669"/>
    <property type="project" value="InterPro"/>
</dbReference>
<dbReference type="GO" id="GO:0002181">
    <property type="term" value="P:cytoplasmic translation"/>
    <property type="evidence" value="ECO:0007669"/>
    <property type="project" value="TreeGrafter"/>
</dbReference>
<dbReference type="FunFam" id="2.30.30.30:FF:000055">
    <property type="entry name" value="50S ribosomal protein L2"/>
    <property type="match status" value="1"/>
</dbReference>
<dbReference type="FunFam" id="2.40.50.140:FF:000003">
    <property type="entry name" value="50S ribosomal protein L2"/>
    <property type="match status" value="1"/>
</dbReference>
<dbReference type="FunFam" id="4.10.950.10:FF:000001">
    <property type="entry name" value="50S ribosomal protein L2"/>
    <property type="match status" value="1"/>
</dbReference>
<dbReference type="Gene3D" id="2.30.30.30">
    <property type="match status" value="1"/>
</dbReference>
<dbReference type="Gene3D" id="2.40.50.140">
    <property type="entry name" value="Nucleic acid-binding proteins"/>
    <property type="match status" value="1"/>
</dbReference>
<dbReference type="Gene3D" id="4.10.950.10">
    <property type="entry name" value="Ribosomal protein L2, domain 3"/>
    <property type="match status" value="1"/>
</dbReference>
<dbReference type="HAMAP" id="MF_01320_B">
    <property type="entry name" value="Ribosomal_uL2_B"/>
    <property type="match status" value="1"/>
</dbReference>
<dbReference type="InterPro" id="IPR012340">
    <property type="entry name" value="NA-bd_OB-fold"/>
</dbReference>
<dbReference type="InterPro" id="IPR014722">
    <property type="entry name" value="Rib_uL2_dom2"/>
</dbReference>
<dbReference type="InterPro" id="IPR002171">
    <property type="entry name" value="Ribosomal_uL2"/>
</dbReference>
<dbReference type="InterPro" id="IPR005880">
    <property type="entry name" value="Ribosomal_uL2_bac/org-type"/>
</dbReference>
<dbReference type="InterPro" id="IPR022669">
    <property type="entry name" value="Ribosomal_uL2_C"/>
</dbReference>
<dbReference type="InterPro" id="IPR022671">
    <property type="entry name" value="Ribosomal_uL2_CS"/>
</dbReference>
<dbReference type="InterPro" id="IPR014726">
    <property type="entry name" value="Ribosomal_uL2_dom3"/>
</dbReference>
<dbReference type="InterPro" id="IPR022666">
    <property type="entry name" value="Ribosomal_uL2_RNA-bd_dom"/>
</dbReference>
<dbReference type="InterPro" id="IPR008991">
    <property type="entry name" value="Translation_prot_SH3-like_sf"/>
</dbReference>
<dbReference type="NCBIfam" id="TIGR01171">
    <property type="entry name" value="rplB_bact"/>
    <property type="match status" value="1"/>
</dbReference>
<dbReference type="PANTHER" id="PTHR13691:SF5">
    <property type="entry name" value="LARGE RIBOSOMAL SUBUNIT PROTEIN UL2M"/>
    <property type="match status" value="1"/>
</dbReference>
<dbReference type="PANTHER" id="PTHR13691">
    <property type="entry name" value="RIBOSOMAL PROTEIN L2"/>
    <property type="match status" value="1"/>
</dbReference>
<dbReference type="Pfam" id="PF00181">
    <property type="entry name" value="Ribosomal_L2"/>
    <property type="match status" value="1"/>
</dbReference>
<dbReference type="Pfam" id="PF03947">
    <property type="entry name" value="Ribosomal_L2_C"/>
    <property type="match status" value="1"/>
</dbReference>
<dbReference type="PIRSF" id="PIRSF002158">
    <property type="entry name" value="Ribosomal_L2"/>
    <property type="match status" value="1"/>
</dbReference>
<dbReference type="SMART" id="SM01383">
    <property type="entry name" value="Ribosomal_L2"/>
    <property type="match status" value="1"/>
</dbReference>
<dbReference type="SMART" id="SM01382">
    <property type="entry name" value="Ribosomal_L2_C"/>
    <property type="match status" value="1"/>
</dbReference>
<dbReference type="SUPFAM" id="SSF50249">
    <property type="entry name" value="Nucleic acid-binding proteins"/>
    <property type="match status" value="1"/>
</dbReference>
<dbReference type="SUPFAM" id="SSF50104">
    <property type="entry name" value="Translation proteins SH3-like domain"/>
    <property type="match status" value="1"/>
</dbReference>
<dbReference type="PROSITE" id="PS00467">
    <property type="entry name" value="RIBOSOMAL_L2"/>
    <property type="match status" value="1"/>
</dbReference>